<keyword id="KW-0066">ATP synthesis</keyword>
<keyword id="KW-0067">ATP-binding</keyword>
<keyword id="KW-0997">Cell inner membrane</keyword>
<keyword id="KW-1003">Cell membrane</keyword>
<keyword id="KW-0139">CF(1)</keyword>
<keyword id="KW-0375">Hydrogen ion transport</keyword>
<keyword id="KW-0406">Ion transport</keyword>
<keyword id="KW-0472">Membrane</keyword>
<keyword id="KW-0547">Nucleotide-binding</keyword>
<keyword id="KW-1185">Reference proteome</keyword>
<keyword id="KW-1278">Translocase</keyword>
<keyword id="KW-0813">Transport</keyword>
<comment type="function">
    <text evidence="1">Produces ATP from ADP in the presence of a proton gradient across the membrane. The alpha chain is a regulatory subunit.</text>
</comment>
<comment type="catalytic activity">
    <reaction evidence="1">
        <text>ATP + H2O + 4 H(+)(in) = ADP + phosphate + 5 H(+)(out)</text>
        <dbReference type="Rhea" id="RHEA:57720"/>
        <dbReference type="ChEBI" id="CHEBI:15377"/>
        <dbReference type="ChEBI" id="CHEBI:15378"/>
        <dbReference type="ChEBI" id="CHEBI:30616"/>
        <dbReference type="ChEBI" id="CHEBI:43474"/>
        <dbReference type="ChEBI" id="CHEBI:456216"/>
        <dbReference type="EC" id="7.1.2.2"/>
    </reaction>
</comment>
<comment type="subunit">
    <text evidence="1">F-type ATPases have 2 components, CF(1) - the catalytic core - and CF(0) - the membrane proton channel. CF(1) has five subunits: alpha(3), beta(3), gamma(1), delta(1), epsilon(1). CF(0) has three main subunits: a(1), b(2) and c(9-12). The alpha and beta chains form an alternating ring which encloses part of the gamma chain. CF(1) is attached to CF(0) by a central stalk formed by the gamma and epsilon chains, while a peripheral stalk is formed by the delta and b chains.</text>
</comment>
<comment type="subcellular location">
    <subcellularLocation>
        <location evidence="1">Cell inner membrane</location>
        <topology evidence="1">Peripheral membrane protein</topology>
    </subcellularLocation>
</comment>
<comment type="similarity">
    <text evidence="1">Belongs to the ATPase alpha/beta chains family.</text>
</comment>
<proteinExistence type="inferred from homology"/>
<sequence length="513" mass="54990">MQQLNPSEISEIIKARIDNLSVTTEAQNEGTVVSVTDGIIRIHGLAEVMYGEMIEFEGGVYGIALNLERDSVGAVILGDYQGVAEGQTCKCTGRILEVPVGPELQGRVVDALGNPIDGKGPIDAKATDAIEKIAPGVIARQSVDQPVQIGLKAVDTMVPIGRGQRELIIGDRQTGKTAIAVDAIINQKGTGIKCIYVAIGQKASSIASVVRKLEEHGAMDHTIVVAATASDPASMQFLAPFAGCTMGEYYRDRGEDCLIIYDDLTKQAWAYRQISLLLRRPPGREAYPGDVFYLHSRLLERAARVNAAHVEKYTNGEVKGQTGSLTALPIIETQAGDVSAFVPTNVISITDGQIFLESDLFNAGIRPAMNAGISVSRVGGSAQTKVIKKLSGGIRTALAQYRELAAFAQFASDLDEATKAQLNHGQRVTELMKQKQYSPQSVAEMAVVVYAANEGFLEDVEVAKMGAFESSLLSYMNSSHAELMAEMNTGAYSDDIAGKLKGALENFKATQTW</sequence>
<organism>
    <name type="scientific">Teredinibacter turnerae (strain ATCC 39867 / T7901)</name>
    <dbReference type="NCBI Taxonomy" id="377629"/>
    <lineage>
        <taxon>Bacteria</taxon>
        <taxon>Pseudomonadati</taxon>
        <taxon>Pseudomonadota</taxon>
        <taxon>Gammaproteobacteria</taxon>
        <taxon>Cellvibrionales</taxon>
        <taxon>Cellvibrionaceae</taxon>
        <taxon>Teredinibacter</taxon>
    </lineage>
</organism>
<evidence type="ECO:0000255" key="1">
    <source>
        <dbReference type="HAMAP-Rule" id="MF_01346"/>
    </source>
</evidence>
<name>ATPA_TERTT</name>
<feature type="chain" id="PRO_1000214819" description="ATP synthase subunit alpha">
    <location>
        <begin position="1"/>
        <end position="513"/>
    </location>
</feature>
<feature type="binding site" evidence="1">
    <location>
        <begin position="170"/>
        <end position="177"/>
    </location>
    <ligand>
        <name>ATP</name>
        <dbReference type="ChEBI" id="CHEBI:30616"/>
    </ligand>
</feature>
<feature type="site" description="Required for activity" evidence="1">
    <location>
        <position position="374"/>
    </location>
</feature>
<reference key="1">
    <citation type="journal article" date="2009" name="PLoS ONE">
        <title>The complete genome of Teredinibacter turnerae T7901: an intracellular endosymbiont of marine wood-boring bivalves (shipworms).</title>
        <authorList>
            <person name="Yang J.C."/>
            <person name="Madupu R."/>
            <person name="Durkin A.S."/>
            <person name="Ekborg N.A."/>
            <person name="Pedamallu C.S."/>
            <person name="Hostetler J.B."/>
            <person name="Radune D."/>
            <person name="Toms B.S."/>
            <person name="Henrissat B."/>
            <person name="Coutinho P.M."/>
            <person name="Schwarz S."/>
            <person name="Field L."/>
            <person name="Trindade-Silva A.E."/>
            <person name="Soares C.A.G."/>
            <person name="Elshahawi S."/>
            <person name="Hanora A."/>
            <person name="Schmidt E.W."/>
            <person name="Haygood M.G."/>
            <person name="Posfai J."/>
            <person name="Benner J."/>
            <person name="Madinger C."/>
            <person name="Nove J."/>
            <person name="Anton B."/>
            <person name="Chaudhary K."/>
            <person name="Foster J."/>
            <person name="Holman A."/>
            <person name="Kumar S."/>
            <person name="Lessard P.A."/>
            <person name="Luyten Y.A."/>
            <person name="Slatko B."/>
            <person name="Wood N."/>
            <person name="Wu B."/>
            <person name="Teplitski M."/>
            <person name="Mougous J.D."/>
            <person name="Ward N."/>
            <person name="Eisen J.A."/>
            <person name="Badger J.H."/>
            <person name="Distel D.L."/>
        </authorList>
    </citation>
    <scope>NUCLEOTIDE SEQUENCE [LARGE SCALE GENOMIC DNA]</scope>
    <source>
        <strain>ATCC 39867 / T7901</strain>
    </source>
</reference>
<accession>C5BKJ7</accession>
<gene>
    <name evidence="1" type="primary">atpA</name>
    <name type="ordered locus">TERTU_4718</name>
</gene>
<protein>
    <recommendedName>
        <fullName evidence="1">ATP synthase subunit alpha</fullName>
        <ecNumber evidence="1">7.1.2.2</ecNumber>
    </recommendedName>
    <alternativeName>
        <fullName evidence="1">ATP synthase F1 sector subunit alpha</fullName>
    </alternativeName>
    <alternativeName>
        <fullName evidence="1">F-ATPase subunit alpha</fullName>
    </alternativeName>
</protein>
<dbReference type="EC" id="7.1.2.2" evidence="1"/>
<dbReference type="EMBL" id="CP001614">
    <property type="protein sequence ID" value="ACR12790.1"/>
    <property type="molecule type" value="Genomic_DNA"/>
</dbReference>
<dbReference type="RefSeq" id="WP_015818902.1">
    <property type="nucleotide sequence ID" value="NC_012997.1"/>
</dbReference>
<dbReference type="SMR" id="C5BKJ7"/>
<dbReference type="STRING" id="377629.TERTU_4718"/>
<dbReference type="KEGG" id="ttu:TERTU_4718"/>
<dbReference type="eggNOG" id="COG0056">
    <property type="taxonomic scope" value="Bacteria"/>
</dbReference>
<dbReference type="HOGENOM" id="CLU_010091_2_1_6"/>
<dbReference type="OrthoDB" id="9803053at2"/>
<dbReference type="Proteomes" id="UP000009080">
    <property type="component" value="Chromosome"/>
</dbReference>
<dbReference type="GO" id="GO:0005886">
    <property type="term" value="C:plasma membrane"/>
    <property type="evidence" value="ECO:0007669"/>
    <property type="project" value="UniProtKB-SubCell"/>
</dbReference>
<dbReference type="GO" id="GO:0045259">
    <property type="term" value="C:proton-transporting ATP synthase complex"/>
    <property type="evidence" value="ECO:0007669"/>
    <property type="project" value="UniProtKB-KW"/>
</dbReference>
<dbReference type="GO" id="GO:0043531">
    <property type="term" value="F:ADP binding"/>
    <property type="evidence" value="ECO:0007669"/>
    <property type="project" value="TreeGrafter"/>
</dbReference>
<dbReference type="GO" id="GO:0005524">
    <property type="term" value="F:ATP binding"/>
    <property type="evidence" value="ECO:0007669"/>
    <property type="project" value="UniProtKB-UniRule"/>
</dbReference>
<dbReference type="GO" id="GO:0046933">
    <property type="term" value="F:proton-transporting ATP synthase activity, rotational mechanism"/>
    <property type="evidence" value="ECO:0007669"/>
    <property type="project" value="UniProtKB-UniRule"/>
</dbReference>
<dbReference type="CDD" id="cd18113">
    <property type="entry name" value="ATP-synt_F1_alpha_C"/>
    <property type="match status" value="1"/>
</dbReference>
<dbReference type="CDD" id="cd18116">
    <property type="entry name" value="ATP-synt_F1_alpha_N"/>
    <property type="match status" value="1"/>
</dbReference>
<dbReference type="CDD" id="cd01132">
    <property type="entry name" value="F1-ATPase_alpha_CD"/>
    <property type="match status" value="1"/>
</dbReference>
<dbReference type="FunFam" id="1.20.150.20:FF:000001">
    <property type="entry name" value="ATP synthase subunit alpha"/>
    <property type="match status" value="1"/>
</dbReference>
<dbReference type="FunFam" id="2.40.30.20:FF:000001">
    <property type="entry name" value="ATP synthase subunit alpha"/>
    <property type="match status" value="1"/>
</dbReference>
<dbReference type="FunFam" id="3.40.50.300:FF:000002">
    <property type="entry name" value="ATP synthase subunit alpha"/>
    <property type="match status" value="1"/>
</dbReference>
<dbReference type="Gene3D" id="2.40.30.20">
    <property type="match status" value="1"/>
</dbReference>
<dbReference type="Gene3D" id="1.20.150.20">
    <property type="entry name" value="ATP synthase alpha/beta chain, C-terminal domain"/>
    <property type="match status" value="1"/>
</dbReference>
<dbReference type="Gene3D" id="3.40.50.300">
    <property type="entry name" value="P-loop containing nucleotide triphosphate hydrolases"/>
    <property type="match status" value="1"/>
</dbReference>
<dbReference type="HAMAP" id="MF_01346">
    <property type="entry name" value="ATP_synth_alpha_bact"/>
    <property type="match status" value="1"/>
</dbReference>
<dbReference type="InterPro" id="IPR023366">
    <property type="entry name" value="ATP_synth_asu-like_sf"/>
</dbReference>
<dbReference type="InterPro" id="IPR000793">
    <property type="entry name" value="ATP_synth_asu_C"/>
</dbReference>
<dbReference type="InterPro" id="IPR038376">
    <property type="entry name" value="ATP_synth_asu_C_sf"/>
</dbReference>
<dbReference type="InterPro" id="IPR033732">
    <property type="entry name" value="ATP_synth_F1_a_nt-bd_dom"/>
</dbReference>
<dbReference type="InterPro" id="IPR005294">
    <property type="entry name" value="ATP_synth_F1_asu"/>
</dbReference>
<dbReference type="InterPro" id="IPR004100">
    <property type="entry name" value="ATPase_F1/V1/A1_a/bsu_N"/>
</dbReference>
<dbReference type="InterPro" id="IPR036121">
    <property type="entry name" value="ATPase_F1/V1/A1_a/bsu_N_sf"/>
</dbReference>
<dbReference type="InterPro" id="IPR000194">
    <property type="entry name" value="ATPase_F1/V1/A1_a/bsu_nucl-bd"/>
</dbReference>
<dbReference type="InterPro" id="IPR027417">
    <property type="entry name" value="P-loop_NTPase"/>
</dbReference>
<dbReference type="NCBIfam" id="TIGR00962">
    <property type="entry name" value="atpA"/>
    <property type="match status" value="1"/>
</dbReference>
<dbReference type="NCBIfam" id="NF009884">
    <property type="entry name" value="PRK13343.1"/>
    <property type="match status" value="1"/>
</dbReference>
<dbReference type="PANTHER" id="PTHR48082">
    <property type="entry name" value="ATP SYNTHASE SUBUNIT ALPHA, MITOCHONDRIAL"/>
    <property type="match status" value="1"/>
</dbReference>
<dbReference type="PANTHER" id="PTHR48082:SF2">
    <property type="entry name" value="ATP SYNTHASE SUBUNIT ALPHA, MITOCHONDRIAL"/>
    <property type="match status" value="1"/>
</dbReference>
<dbReference type="Pfam" id="PF00006">
    <property type="entry name" value="ATP-synt_ab"/>
    <property type="match status" value="1"/>
</dbReference>
<dbReference type="Pfam" id="PF00306">
    <property type="entry name" value="ATP-synt_ab_C"/>
    <property type="match status" value="1"/>
</dbReference>
<dbReference type="Pfam" id="PF02874">
    <property type="entry name" value="ATP-synt_ab_N"/>
    <property type="match status" value="1"/>
</dbReference>
<dbReference type="PIRSF" id="PIRSF039088">
    <property type="entry name" value="F_ATPase_subunit_alpha"/>
    <property type="match status" value="1"/>
</dbReference>
<dbReference type="SUPFAM" id="SSF47917">
    <property type="entry name" value="C-terminal domain of alpha and beta subunits of F1 ATP synthase"/>
    <property type="match status" value="1"/>
</dbReference>
<dbReference type="SUPFAM" id="SSF50615">
    <property type="entry name" value="N-terminal domain of alpha and beta subunits of F1 ATP synthase"/>
    <property type="match status" value="1"/>
</dbReference>
<dbReference type="SUPFAM" id="SSF52540">
    <property type="entry name" value="P-loop containing nucleoside triphosphate hydrolases"/>
    <property type="match status" value="1"/>
</dbReference>